<comment type="function">
    <text evidence="1">Catalyzes the addition and repair of the essential 3'-terminal CCA sequence in tRNAs without using a nucleic acid template. Adds these three nucleotides in the order of C, C, and A to the tRNA nucleotide-73, using CTP and ATP as substrates and producing inorganic pyrophosphate. tRNA 3'-terminal CCA addition is required both for tRNA processing and repair. Also involved in tRNA surveillance by mediating tandem CCA addition to generate a CCACCA at the 3' terminus of unstable tRNAs. While stable tRNAs receive only 3'-terminal CCA, unstable tRNAs are marked with CCACCA and rapidly degraded.</text>
</comment>
<comment type="catalytic activity">
    <reaction evidence="1">
        <text>a tRNA precursor + 2 CTP + ATP = a tRNA with a 3' CCA end + 3 diphosphate</text>
        <dbReference type="Rhea" id="RHEA:14433"/>
        <dbReference type="Rhea" id="RHEA-COMP:10465"/>
        <dbReference type="Rhea" id="RHEA-COMP:10468"/>
        <dbReference type="ChEBI" id="CHEBI:30616"/>
        <dbReference type="ChEBI" id="CHEBI:33019"/>
        <dbReference type="ChEBI" id="CHEBI:37563"/>
        <dbReference type="ChEBI" id="CHEBI:74896"/>
        <dbReference type="ChEBI" id="CHEBI:83071"/>
        <dbReference type="EC" id="2.7.7.72"/>
    </reaction>
</comment>
<comment type="catalytic activity">
    <reaction evidence="1">
        <text>a tRNA with a 3' CCA end + 2 CTP + ATP = a tRNA with a 3' CCACCA end + 3 diphosphate</text>
        <dbReference type="Rhea" id="RHEA:76235"/>
        <dbReference type="Rhea" id="RHEA-COMP:10468"/>
        <dbReference type="Rhea" id="RHEA-COMP:18655"/>
        <dbReference type="ChEBI" id="CHEBI:30616"/>
        <dbReference type="ChEBI" id="CHEBI:33019"/>
        <dbReference type="ChEBI" id="CHEBI:37563"/>
        <dbReference type="ChEBI" id="CHEBI:83071"/>
        <dbReference type="ChEBI" id="CHEBI:195187"/>
    </reaction>
    <physiologicalReaction direction="left-to-right" evidence="1">
        <dbReference type="Rhea" id="RHEA:76236"/>
    </physiologicalReaction>
</comment>
<comment type="cofactor">
    <cofactor evidence="1">
        <name>Mg(2+)</name>
        <dbReference type="ChEBI" id="CHEBI:18420"/>
    </cofactor>
</comment>
<comment type="subunit">
    <text evidence="1">Homodimer.</text>
</comment>
<comment type="miscellaneous">
    <text evidence="1">A single active site specifically recognizes both ATP and CTP and is responsible for their addition.</text>
</comment>
<comment type="similarity">
    <text evidence="1">Belongs to the tRNA nucleotidyltransferase/poly(A) polymerase family. Bacterial CCA-adding enzyme type 3 subfamily.</text>
</comment>
<organism>
    <name type="scientific">Ligilactobacillus salivarius (strain UCC118)</name>
    <name type="common">Lactobacillus salivarius</name>
    <dbReference type="NCBI Taxonomy" id="362948"/>
    <lineage>
        <taxon>Bacteria</taxon>
        <taxon>Bacillati</taxon>
        <taxon>Bacillota</taxon>
        <taxon>Bacilli</taxon>
        <taxon>Lactobacillales</taxon>
        <taxon>Lactobacillaceae</taxon>
        <taxon>Ligilactobacillus</taxon>
    </lineage>
</organism>
<sequence length="404" mass="46377">MIVENIPDEFKKALPILEKIREAGFEAYFVGGSVRDTLLGLPIHDVDIASSAYPEEIKQIFSKTVDTGVEHGTVMVLDHGTGYEITTFRTESTYQDYRRPDKVEFVRSLEEDLKRRDLTINALAMDDKGKIIDLFDGLKDLKNGIIRAVGNPEERFHEDALRMMRAVRFGSQLDFKVELDTFNAIKKNSHLLEKIAIERIHVEWVKLLLGKNPKQGLQEFLDTELYKYCPLFADKYAELKSILEFSDFKLNTEEECWTLLSDVFKLKDTDISNLLRSWKSSNNIIKYVIAASLCVQKIKDSKLDIETYYQNGIEIILTANQIAKIRGFGMDDNELKNNYDKLPIKSRKEMKINGKDLVQEAGVKPGKIMGEILNKLEKEIVFGNIINDKEILIENAKKLLEEKV</sequence>
<accession>Q1WU19</accession>
<gene>
    <name evidence="1" type="primary">cca</name>
    <name type="ordered locus">LSL_0706</name>
</gene>
<reference key="1">
    <citation type="journal article" date="2006" name="Proc. Natl. Acad. Sci. U.S.A.">
        <title>Multireplicon genome architecture of Lactobacillus salivarius.</title>
        <authorList>
            <person name="Claesson M.J."/>
            <person name="Li Y."/>
            <person name="Leahy S."/>
            <person name="Canchaya C."/>
            <person name="van Pijkeren J.P."/>
            <person name="Cerdeno-Tarraga A.M."/>
            <person name="Parkhill J."/>
            <person name="Flynn S."/>
            <person name="O'Sullivan G.C."/>
            <person name="Collins J.K."/>
            <person name="Higgins D."/>
            <person name="Shanahan F."/>
            <person name="Fitzgerald G.F."/>
            <person name="van Sinderen D."/>
            <person name="O'Toole P.W."/>
        </authorList>
    </citation>
    <scope>NUCLEOTIDE SEQUENCE [LARGE SCALE GENOMIC DNA]</scope>
    <source>
        <strain>UCC118</strain>
    </source>
</reference>
<protein>
    <recommendedName>
        <fullName evidence="1">CCA-adding enzyme</fullName>
        <ecNumber evidence="1">2.7.7.72</ecNumber>
    </recommendedName>
    <alternativeName>
        <fullName evidence="1">CCA tRNA nucleotidyltransferase</fullName>
    </alternativeName>
    <alternativeName>
        <fullName evidence="1">tRNA CCA-pyrophosphorylase</fullName>
    </alternativeName>
    <alternativeName>
        <fullName evidence="1">tRNA adenylyl-/cytidylyl- transferase</fullName>
    </alternativeName>
    <alternativeName>
        <fullName evidence="1">tRNA nucleotidyltransferase</fullName>
    </alternativeName>
    <alternativeName>
        <fullName evidence="1">tRNA-NT</fullName>
    </alternativeName>
</protein>
<dbReference type="EC" id="2.7.7.72" evidence="1"/>
<dbReference type="EMBL" id="CP000233">
    <property type="protein sequence ID" value="ABD99516.1"/>
    <property type="molecule type" value="Genomic_DNA"/>
</dbReference>
<dbReference type="RefSeq" id="WP_011475877.1">
    <property type="nucleotide sequence ID" value="NC_007929.1"/>
</dbReference>
<dbReference type="RefSeq" id="YP_535599.1">
    <property type="nucleotide sequence ID" value="NC_007929.1"/>
</dbReference>
<dbReference type="SMR" id="Q1WU19"/>
<dbReference type="STRING" id="362948.LSL_0706"/>
<dbReference type="KEGG" id="lsl:LSL_0706"/>
<dbReference type="PATRIC" id="fig|362948.14.peg.785"/>
<dbReference type="HOGENOM" id="CLU_015961_3_0_9"/>
<dbReference type="OrthoDB" id="9805698at2"/>
<dbReference type="Proteomes" id="UP000006559">
    <property type="component" value="Chromosome"/>
</dbReference>
<dbReference type="GO" id="GO:0005524">
    <property type="term" value="F:ATP binding"/>
    <property type="evidence" value="ECO:0007669"/>
    <property type="project" value="UniProtKB-UniRule"/>
</dbReference>
<dbReference type="GO" id="GO:0004810">
    <property type="term" value="F:CCA tRNA nucleotidyltransferase activity"/>
    <property type="evidence" value="ECO:0007669"/>
    <property type="project" value="UniProtKB-UniRule"/>
</dbReference>
<dbReference type="GO" id="GO:0000287">
    <property type="term" value="F:magnesium ion binding"/>
    <property type="evidence" value="ECO:0007669"/>
    <property type="project" value="UniProtKB-UniRule"/>
</dbReference>
<dbReference type="GO" id="GO:0000049">
    <property type="term" value="F:tRNA binding"/>
    <property type="evidence" value="ECO:0007669"/>
    <property type="project" value="UniProtKB-UniRule"/>
</dbReference>
<dbReference type="GO" id="GO:0042245">
    <property type="term" value="P:RNA repair"/>
    <property type="evidence" value="ECO:0007669"/>
    <property type="project" value="UniProtKB-KW"/>
</dbReference>
<dbReference type="GO" id="GO:0001680">
    <property type="term" value="P:tRNA 3'-terminal CCA addition"/>
    <property type="evidence" value="ECO:0007669"/>
    <property type="project" value="UniProtKB-UniRule"/>
</dbReference>
<dbReference type="CDD" id="cd05398">
    <property type="entry name" value="NT_ClassII-CCAase"/>
    <property type="match status" value="1"/>
</dbReference>
<dbReference type="Gene3D" id="1.10.110.30">
    <property type="match status" value="1"/>
</dbReference>
<dbReference type="Gene3D" id="1.10.246.80">
    <property type="match status" value="1"/>
</dbReference>
<dbReference type="Gene3D" id="1.20.58.560">
    <property type="match status" value="1"/>
</dbReference>
<dbReference type="Gene3D" id="3.30.460.10">
    <property type="entry name" value="Beta Polymerase, domain 2"/>
    <property type="match status" value="1"/>
</dbReference>
<dbReference type="HAMAP" id="MF_01263">
    <property type="entry name" value="CCA_bact_type3"/>
    <property type="match status" value="1"/>
</dbReference>
<dbReference type="InterPro" id="IPR050264">
    <property type="entry name" value="Bact_CCA-adding_enz_type3_sf"/>
</dbReference>
<dbReference type="InterPro" id="IPR032810">
    <property type="entry name" value="CCA-adding_enz_C"/>
</dbReference>
<dbReference type="InterPro" id="IPR023068">
    <property type="entry name" value="CCA-adding_enz_firmicutes"/>
</dbReference>
<dbReference type="InterPro" id="IPR043519">
    <property type="entry name" value="NT_sf"/>
</dbReference>
<dbReference type="InterPro" id="IPR002646">
    <property type="entry name" value="PolA_pol_head_dom"/>
</dbReference>
<dbReference type="InterPro" id="IPR032828">
    <property type="entry name" value="PolyA_RNA-bd"/>
</dbReference>
<dbReference type="NCBIfam" id="NF009814">
    <property type="entry name" value="PRK13299.1"/>
    <property type="match status" value="1"/>
</dbReference>
<dbReference type="PANTHER" id="PTHR46173">
    <property type="entry name" value="CCA TRNA NUCLEOTIDYLTRANSFERASE 1, MITOCHONDRIAL"/>
    <property type="match status" value="1"/>
</dbReference>
<dbReference type="PANTHER" id="PTHR46173:SF1">
    <property type="entry name" value="CCA TRNA NUCLEOTIDYLTRANSFERASE 1, MITOCHONDRIAL"/>
    <property type="match status" value="1"/>
</dbReference>
<dbReference type="Pfam" id="PF01743">
    <property type="entry name" value="PolyA_pol"/>
    <property type="match status" value="1"/>
</dbReference>
<dbReference type="Pfam" id="PF12627">
    <property type="entry name" value="PolyA_pol_RNAbd"/>
    <property type="match status" value="1"/>
</dbReference>
<dbReference type="Pfam" id="PF13735">
    <property type="entry name" value="tRNA_NucTran2_2"/>
    <property type="match status" value="1"/>
</dbReference>
<dbReference type="SUPFAM" id="SSF81301">
    <property type="entry name" value="Nucleotidyltransferase"/>
    <property type="match status" value="1"/>
</dbReference>
<dbReference type="SUPFAM" id="SSF81891">
    <property type="entry name" value="Poly A polymerase C-terminal region-like"/>
    <property type="match status" value="1"/>
</dbReference>
<feature type="chain" id="PRO_1000054328" description="CCA-adding enzyme">
    <location>
        <begin position="1"/>
        <end position="404"/>
    </location>
</feature>
<feature type="binding site" evidence="1">
    <location>
        <position position="32"/>
    </location>
    <ligand>
        <name>ATP</name>
        <dbReference type="ChEBI" id="CHEBI:30616"/>
    </ligand>
</feature>
<feature type="binding site" evidence="1">
    <location>
        <position position="32"/>
    </location>
    <ligand>
        <name>CTP</name>
        <dbReference type="ChEBI" id="CHEBI:37563"/>
    </ligand>
</feature>
<feature type="binding site" evidence="1">
    <location>
        <position position="35"/>
    </location>
    <ligand>
        <name>ATP</name>
        <dbReference type="ChEBI" id="CHEBI:30616"/>
    </ligand>
</feature>
<feature type="binding site" evidence="1">
    <location>
        <position position="35"/>
    </location>
    <ligand>
        <name>CTP</name>
        <dbReference type="ChEBI" id="CHEBI:37563"/>
    </ligand>
</feature>
<feature type="binding site" evidence="1">
    <location>
        <position position="45"/>
    </location>
    <ligand>
        <name>Mg(2+)</name>
        <dbReference type="ChEBI" id="CHEBI:18420"/>
    </ligand>
</feature>
<feature type="binding site" evidence="1">
    <location>
        <position position="47"/>
    </location>
    <ligand>
        <name>Mg(2+)</name>
        <dbReference type="ChEBI" id="CHEBI:18420"/>
    </ligand>
</feature>
<feature type="binding site" evidence="1">
    <location>
        <position position="116"/>
    </location>
    <ligand>
        <name>ATP</name>
        <dbReference type="ChEBI" id="CHEBI:30616"/>
    </ligand>
</feature>
<feature type="binding site" evidence="1">
    <location>
        <position position="116"/>
    </location>
    <ligand>
        <name>CTP</name>
        <dbReference type="ChEBI" id="CHEBI:37563"/>
    </ligand>
</feature>
<feature type="binding site" evidence="1">
    <location>
        <position position="159"/>
    </location>
    <ligand>
        <name>ATP</name>
        <dbReference type="ChEBI" id="CHEBI:30616"/>
    </ligand>
</feature>
<feature type="binding site" evidence="1">
    <location>
        <position position="159"/>
    </location>
    <ligand>
        <name>CTP</name>
        <dbReference type="ChEBI" id="CHEBI:37563"/>
    </ligand>
</feature>
<feature type="binding site" evidence="1">
    <location>
        <position position="162"/>
    </location>
    <ligand>
        <name>ATP</name>
        <dbReference type="ChEBI" id="CHEBI:30616"/>
    </ligand>
</feature>
<feature type="binding site" evidence="1">
    <location>
        <position position="162"/>
    </location>
    <ligand>
        <name>CTP</name>
        <dbReference type="ChEBI" id="CHEBI:37563"/>
    </ligand>
</feature>
<feature type="binding site" evidence="1">
    <location>
        <position position="165"/>
    </location>
    <ligand>
        <name>ATP</name>
        <dbReference type="ChEBI" id="CHEBI:30616"/>
    </ligand>
</feature>
<feature type="binding site" evidence="1">
    <location>
        <position position="165"/>
    </location>
    <ligand>
        <name>CTP</name>
        <dbReference type="ChEBI" id="CHEBI:37563"/>
    </ligand>
</feature>
<feature type="binding site" evidence="1">
    <location>
        <position position="168"/>
    </location>
    <ligand>
        <name>ATP</name>
        <dbReference type="ChEBI" id="CHEBI:30616"/>
    </ligand>
</feature>
<feature type="binding site" evidence="1">
    <location>
        <position position="168"/>
    </location>
    <ligand>
        <name>CTP</name>
        <dbReference type="ChEBI" id="CHEBI:37563"/>
    </ligand>
</feature>
<proteinExistence type="inferred from homology"/>
<keyword id="KW-0067">ATP-binding</keyword>
<keyword id="KW-0460">Magnesium</keyword>
<keyword id="KW-0479">Metal-binding</keyword>
<keyword id="KW-0547">Nucleotide-binding</keyword>
<keyword id="KW-0548">Nucleotidyltransferase</keyword>
<keyword id="KW-1185">Reference proteome</keyword>
<keyword id="KW-0692">RNA repair</keyword>
<keyword id="KW-0694">RNA-binding</keyword>
<keyword id="KW-0808">Transferase</keyword>
<keyword id="KW-0819">tRNA processing</keyword>
<name>CCA_LIGS1</name>
<evidence type="ECO:0000255" key="1">
    <source>
        <dbReference type="HAMAP-Rule" id="MF_01263"/>
    </source>
</evidence>